<evidence type="ECO:0000250" key="1">
    <source>
        <dbReference type="UniProtKB" id="D6XZ22"/>
    </source>
</evidence>
<evidence type="ECO:0000250" key="2">
    <source>
        <dbReference type="UniProtKB" id="Q32M88"/>
    </source>
</evidence>
<evidence type="ECO:0000305" key="3"/>
<keyword id="KW-0326">Glycosidase</keyword>
<keyword id="KW-0378">Hydrolase</keyword>
<keyword id="KW-1185">Reference proteome</keyword>
<comment type="function">
    <text evidence="2">Catalyzes the hydrolysis of glucose from the disaccharide unit linked to hydroxylysine residues of collagen and collagen-like proteins.</text>
</comment>
<comment type="catalytic activity">
    <reaction evidence="2">
        <text>(5R)-5-O-[alpha-D-glucosyl-(1-&gt;2)-beta-D-galactosyl]-5-hydroxy-L-lysyl-[collagen] + H2O = (5R)-5-O-(beta-D-galactosyl)-5-hydroxy-L-lysyl-[collagen] + D-glucose</text>
        <dbReference type="Rhea" id="RHEA:11068"/>
        <dbReference type="Rhea" id="RHEA-COMP:12753"/>
        <dbReference type="Rhea" id="RHEA-COMP:12754"/>
        <dbReference type="ChEBI" id="CHEBI:4167"/>
        <dbReference type="ChEBI" id="CHEBI:15377"/>
        <dbReference type="ChEBI" id="CHEBI:133443"/>
        <dbReference type="ChEBI" id="CHEBI:133452"/>
        <dbReference type="EC" id="3.2.1.107"/>
    </reaction>
</comment>
<comment type="similarity">
    <text evidence="3">Belongs to the glycosyl hydrolase 65 family.</text>
</comment>
<dbReference type="EC" id="3.2.1.107" evidence="2"/>
<dbReference type="EMBL" id="BC125951">
    <property type="protein sequence ID" value="AAI25952.1"/>
    <property type="molecule type" value="mRNA"/>
</dbReference>
<dbReference type="RefSeq" id="NP_001071193.1">
    <property type="nucleotide sequence ID" value="NM_001077725.1"/>
</dbReference>
<dbReference type="SMR" id="A0JMP0"/>
<dbReference type="FunCoup" id="A0JMP0">
    <property type="interactions" value="18"/>
</dbReference>
<dbReference type="STRING" id="7955.ENSDARP00000004006"/>
<dbReference type="CAZy" id="GH65">
    <property type="family name" value="Glycoside Hydrolase Family 65"/>
</dbReference>
<dbReference type="PaxDb" id="7955-ENSDARP00000004006"/>
<dbReference type="PeptideAtlas" id="A0JMP0"/>
<dbReference type="GeneID" id="777617"/>
<dbReference type="KEGG" id="dre:777617"/>
<dbReference type="AGR" id="ZFIN:ZDB-GENE-061103-319"/>
<dbReference type="CTD" id="80162"/>
<dbReference type="ZFIN" id="ZDB-GENE-061103-319">
    <property type="gene designation" value="pgghg"/>
</dbReference>
<dbReference type="eggNOG" id="KOG4125">
    <property type="taxonomic scope" value="Eukaryota"/>
</dbReference>
<dbReference type="InParanoid" id="A0JMP0"/>
<dbReference type="OrthoDB" id="200349at2759"/>
<dbReference type="PhylomeDB" id="A0JMP0"/>
<dbReference type="PRO" id="PR:A0JMP0"/>
<dbReference type="Proteomes" id="UP000000437">
    <property type="component" value="Chromosome 25"/>
</dbReference>
<dbReference type="GO" id="GO:0005829">
    <property type="term" value="C:cytosol"/>
    <property type="evidence" value="ECO:0000318"/>
    <property type="project" value="GO_Central"/>
</dbReference>
<dbReference type="GO" id="GO:0047402">
    <property type="term" value="F:protein-glucosylgalactosylhydroxylysine glucosidase activity"/>
    <property type="evidence" value="ECO:0000318"/>
    <property type="project" value="GO_Central"/>
</dbReference>
<dbReference type="GO" id="GO:0005975">
    <property type="term" value="P:carbohydrate metabolic process"/>
    <property type="evidence" value="ECO:0000318"/>
    <property type="project" value="GO_Central"/>
</dbReference>
<dbReference type="FunFam" id="1.50.10.10:FF:000023">
    <property type="entry name" value="Protein-glucosylgalactosylhydroxylysine glucosidase"/>
    <property type="match status" value="1"/>
</dbReference>
<dbReference type="FunFam" id="2.60.420.10:FF:000003">
    <property type="entry name" value="Protein-glucosylgalactosylhydroxylysine glucosidase"/>
    <property type="match status" value="1"/>
</dbReference>
<dbReference type="Gene3D" id="1.50.10.10">
    <property type="match status" value="1"/>
</dbReference>
<dbReference type="Gene3D" id="2.60.420.10">
    <property type="entry name" value="Maltose phosphorylase, domain 3"/>
    <property type="match status" value="1"/>
</dbReference>
<dbReference type="InterPro" id="IPR008928">
    <property type="entry name" value="6-hairpin_glycosidase_sf"/>
</dbReference>
<dbReference type="InterPro" id="IPR012341">
    <property type="entry name" value="6hp_glycosidase-like_sf"/>
</dbReference>
<dbReference type="InterPro" id="IPR005195">
    <property type="entry name" value="Glyco_hydro_65_M"/>
</dbReference>
<dbReference type="PANTHER" id="PTHR11051">
    <property type="entry name" value="GLYCOSYL HYDROLASE-RELATED"/>
    <property type="match status" value="1"/>
</dbReference>
<dbReference type="PANTHER" id="PTHR11051:SF8">
    <property type="entry name" value="PROTEIN-GLUCOSYLGALACTOSYLHYDROXYLYSINE GLUCOSIDASE"/>
    <property type="match status" value="1"/>
</dbReference>
<dbReference type="Pfam" id="PF03632">
    <property type="entry name" value="Glyco_hydro_65m"/>
    <property type="match status" value="1"/>
</dbReference>
<dbReference type="SUPFAM" id="SSF48208">
    <property type="entry name" value="Six-hairpin glycosidases"/>
    <property type="match status" value="1"/>
</dbReference>
<accession>A0JMP0</accession>
<sequence>MGGVYNGDGGTCHRGNIPCPLAAQMKTGEVGRQLYELNMHTGVFSHTVVTSDFEAIQVLYAHRNQSNLLVMEILLKRIKTSAEPITIQLESSFKPQSEDIAFQNAPDYKGGRHIFGQTASSEVPGGVRPVVHLIWTPVTPTLTLPANQSQSSWTFLVAVARSNESAQSFYDSGLALINTGDLRPSHQRSWAELWKGSSIEVIGAESLNRALIGCMFYLLGSFPYVNKEASAAFEFGGVSPGGLSNGSEDEDYHGHVFWDQDTWMYPSIALFYPALARAVLQYRVETLEGAQVNAQQMGCKGLKFAWESAVTGVDVCPEDVYSQQELHINGDVILAFQQYYYLTQDLELFQSGRGSEVVWGVADFWVSRVTWDSADQQYHIKGVIPPDEYYFTVDNSVFTNAVAQRSLEFAVELSALLAEVPPPAWQDIADKIKIPFDPELKFHPEFDGYKPGNKVKQADVVLLGFPLAFPMSPEIRRNDLEMYEAVTDPLGPAMTWGMFALGWLELGEAEKAQKLLQKCFKNVQKPFQVWSESADGSGCVNFLTGMGGFLQAVLFGYTGFRVQKEQLAFSPLLPLDVSALSVKGVCYLGHKMDWTITSEEVKVSVRKTDSKETFTLQVVLNSGSTLLLTPGQSVSFPRQPGHICQLKSSSSCWPI</sequence>
<reference key="1">
    <citation type="submission" date="2006-10" db="EMBL/GenBank/DDBJ databases">
        <authorList>
            <consortium name="NIH - Zebrafish Gene Collection (ZGC) project"/>
        </authorList>
    </citation>
    <scope>NUCLEOTIDE SEQUENCE [LARGE SCALE MRNA]</scope>
    <source>
        <tissue>Ovary</tissue>
    </source>
</reference>
<proteinExistence type="evidence at transcript level"/>
<organism>
    <name type="scientific">Danio rerio</name>
    <name type="common">Zebrafish</name>
    <name type="synonym">Brachydanio rerio</name>
    <dbReference type="NCBI Taxonomy" id="7955"/>
    <lineage>
        <taxon>Eukaryota</taxon>
        <taxon>Metazoa</taxon>
        <taxon>Chordata</taxon>
        <taxon>Craniata</taxon>
        <taxon>Vertebrata</taxon>
        <taxon>Euteleostomi</taxon>
        <taxon>Actinopterygii</taxon>
        <taxon>Neopterygii</taxon>
        <taxon>Teleostei</taxon>
        <taxon>Ostariophysi</taxon>
        <taxon>Cypriniformes</taxon>
        <taxon>Danionidae</taxon>
        <taxon>Danioninae</taxon>
        <taxon>Danio</taxon>
    </lineage>
</organism>
<protein>
    <recommendedName>
        <fullName evidence="2">Protein-glucosylgalactosylhydroxylysine glucosidase</fullName>
        <ecNumber evidence="2">3.2.1.107</ecNumber>
    </recommendedName>
    <alternativeName>
        <fullName evidence="2">Acid trehalase-like protein 1</fullName>
    </alternativeName>
</protein>
<feature type="chain" id="PRO_0000329006" description="Protein-glucosylgalactosylhydroxylysine glucosidase">
    <location>
        <begin position="1"/>
        <end position="655"/>
    </location>
</feature>
<feature type="active site" description="Proton donor" evidence="2">
    <location>
        <position position="388"/>
    </location>
</feature>
<feature type="binding site" evidence="1">
    <location>
        <begin position="258"/>
        <end position="259"/>
    </location>
    <ligand>
        <name>substrate</name>
    </ligand>
</feature>
<feature type="binding site" evidence="1">
    <location>
        <begin position="456"/>
        <end position="457"/>
    </location>
    <ligand>
        <name>substrate</name>
    </ligand>
</feature>
<gene>
    <name evidence="2" type="primary">pgghg</name>
    <name evidence="2" type="synonym">athl1</name>
    <name type="ORF">zgc:154078</name>
</gene>
<name>PGGHG_DANRE</name>